<evidence type="ECO:0000255" key="1">
    <source>
        <dbReference type="HAMAP-Rule" id="MF_00379"/>
    </source>
</evidence>
<sequence length="428" mass="45911">MDTIYALASARGKAGVAVLRLSGPQAYEAVAAFGVSLPEVRRAALRRLTWNGEVLDEALILLFAEGASFTGERSAEIHLHGSAAAVSSVLQALSELPGLRLADAGEFTRRALDNGRLDLAQVEGLADLLDSETEAQRRQAMRVFSGAIGKRTERWRSDLIRAAALLEATIDFADEDVPVDVTPEVRGLLERLISDLKREVDGSRVAERIRDGFEVAIIGAPNAGKSTLLNALAQREAAITSEVAGTTRDVIEVRMNLGGLAVTLLDTAGLRETHDPVEALGIDRALTRARAADLRIFLLDQSGEVVGLEPEADDLIVQGKADTRLTRGLSVSGLTGDGIQELVEALQDRLLARTAGAGSFTRERHRLAMERAIRAMESAHVQLMQGVPHPELAAEDLRLALRALDSLVGRVDVEALLGEIFSSFCIGK</sequence>
<protein>
    <recommendedName>
        <fullName evidence="1">tRNA modification GTPase MnmE</fullName>
        <ecNumber evidence="1">3.6.-.-</ecNumber>
    </recommendedName>
</protein>
<keyword id="KW-0963">Cytoplasm</keyword>
<keyword id="KW-0342">GTP-binding</keyword>
<keyword id="KW-0378">Hydrolase</keyword>
<keyword id="KW-0460">Magnesium</keyword>
<keyword id="KW-0479">Metal-binding</keyword>
<keyword id="KW-0547">Nucleotide-binding</keyword>
<keyword id="KW-0630">Potassium</keyword>
<keyword id="KW-0819">tRNA processing</keyword>
<organism>
    <name type="scientific">Cereibacter sphaeroides (strain ATCC 17025 / ATH 2.4.3)</name>
    <name type="common">Rhodobacter sphaeroides</name>
    <dbReference type="NCBI Taxonomy" id="349102"/>
    <lineage>
        <taxon>Bacteria</taxon>
        <taxon>Pseudomonadati</taxon>
        <taxon>Pseudomonadota</taxon>
        <taxon>Alphaproteobacteria</taxon>
        <taxon>Rhodobacterales</taxon>
        <taxon>Paracoccaceae</taxon>
        <taxon>Cereibacter</taxon>
    </lineage>
</organism>
<name>MNME_CERS5</name>
<accession>A4WVZ0</accession>
<comment type="function">
    <text evidence="1">Exhibits a very high intrinsic GTPase hydrolysis rate. Involved in the addition of a carboxymethylaminomethyl (cmnm) group at the wobble position (U34) of certain tRNAs, forming tRNA-cmnm(5)s(2)U34.</text>
</comment>
<comment type="cofactor">
    <cofactor evidence="1">
        <name>K(+)</name>
        <dbReference type="ChEBI" id="CHEBI:29103"/>
    </cofactor>
    <text evidence="1">Binds 1 potassium ion per subunit.</text>
</comment>
<comment type="subunit">
    <text evidence="1">Homodimer. Heterotetramer of two MnmE and two MnmG subunits.</text>
</comment>
<comment type="subcellular location">
    <subcellularLocation>
        <location evidence="1">Cytoplasm</location>
    </subcellularLocation>
</comment>
<comment type="similarity">
    <text evidence="1">Belongs to the TRAFAC class TrmE-Era-EngA-EngB-Septin-like GTPase superfamily. TrmE GTPase family.</text>
</comment>
<gene>
    <name evidence="1" type="primary">mnmE</name>
    <name evidence="1" type="synonym">trmE</name>
    <name type="ordered locus">Rsph17025_2667</name>
</gene>
<feature type="chain" id="PRO_0000345887" description="tRNA modification GTPase MnmE">
    <location>
        <begin position="1"/>
        <end position="428"/>
    </location>
</feature>
<feature type="domain" description="TrmE-type G">
    <location>
        <begin position="212"/>
        <end position="351"/>
    </location>
</feature>
<feature type="binding site" evidence="1">
    <location>
        <position position="20"/>
    </location>
    <ligand>
        <name>(6S)-5-formyl-5,6,7,8-tetrahydrofolate</name>
        <dbReference type="ChEBI" id="CHEBI:57457"/>
    </ligand>
</feature>
<feature type="binding site" evidence="1">
    <location>
        <position position="76"/>
    </location>
    <ligand>
        <name>(6S)-5-formyl-5,6,7,8-tetrahydrofolate</name>
        <dbReference type="ChEBI" id="CHEBI:57457"/>
    </ligand>
</feature>
<feature type="binding site" evidence="1">
    <location>
        <position position="116"/>
    </location>
    <ligand>
        <name>(6S)-5-formyl-5,6,7,8-tetrahydrofolate</name>
        <dbReference type="ChEBI" id="CHEBI:57457"/>
    </ligand>
</feature>
<feature type="binding site" evidence="1">
    <location>
        <begin position="222"/>
        <end position="227"/>
    </location>
    <ligand>
        <name>GTP</name>
        <dbReference type="ChEBI" id="CHEBI:37565"/>
    </ligand>
</feature>
<feature type="binding site" evidence="1">
    <location>
        <position position="222"/>
    </location>
    <ligand>
        <name>K(+)</name>
        <dbReference type="ChEBI" id="CHEBI:29103"/>
    </ligand>
</feature>
<feature type="binding site" evidence="1">
    <location>
        <position position="226"/>
    </location>
    <ligand>
        <name>Mg(2+)</name>
        <dbReference type="ChEBI" id="CHEBI:18420"/>
    </ligand>
</feature>
<feature type="binding site" evidence="1">
    <location>
        <begin position="241"/>
        <end position="247"/>
    </location>
    <ligand>
        <name>GTP</name>
        <dbReference type="ChEBI" id="CHEBI:37565"/>
    </ligand>
</feature>
<feature type="binding site" evidence="1">
    <location>
        <position position="241"/>
    </location>
    <ligand>
        <name>K(+)</name>
        <dbReference type="ChEBI" id="CHEBI:29103"/>
    </ligand>
</feature>
<feature type="binding site" evidence="1">
    <location>
        <position position="243"/>
    </location>
    <ligand>
        <name>K(+)</name>
        <dbReference type="ChEBI" id="CHEBI:29103"/>
    </ligand>
</feature>
<feature type="binding site" evidence="1">
    <location>
        <position position="246"/>
    </location>
    <ligand>
        <name>K(+)</name>
        <dbReference type="ChEBI" id="CHEBI:29103"/>
    </ligand>
</feature>
<feature type="binding site" evidence="1">
    <location>
        <position position="247"/>
    </location>
    <ligand>
        <name>Mg(2+)</name>
        <dbReference type="ChEBI" id="CHEBI:18420"/>
    </ligand>
</feature>
<feature type="binding site" evidence="1">
    <location>
        <begin position="266"/>
        <end position="269"/>
    </location>
    <ligand>
        <name>GTP</name>
        <dbReference type="ChEBI" id="CHEBI:37565"/>
    </ligand>
</feature>
<feature type="binding site" evidence="1">
    <location>
        <position position="428"/>
    </location>
    <ligand>
        <name>(6S)-5-formyl-5,6,7,8-tetrahydrofolate</name>
        <dbReference type="ChEBI" id="CHEBI:57457"/>
    </ligand>
</feature>
<dbReference type="EC" id="3.6.-.-" evidence="1"/>
<dbReference type="EMBL" id="CP000661">
    <property type="protein sequence ID" value="ABP71554.1"/>
    <property type="molecule type" value="Genomic_DNA"/>
</dbReference>
<dbReference type="SMR" id="A4WVZ0"/>
<dbReference type="STRING" id="349102.Rsph17025_2667"/>
<dbReference type="KEGG" id="rsq:Rsph17025_2667"/>
<dbReference type="eggNOG" id="COG0486">
    <property type="taxonomic scope" value="Bacteria"/>
</dbReference>
<dbReference type="HOGENOM" id="CLU_019624_3_1_5"/>
<dbReference type="BioCyc" id="RSPH349102:G1G8M-2747-MONOMER"/>
<dbReference type="GO" id="GO:0005737">
    <property type="term" value="C:cytoplasm"/>
    <property type="evidence" value="ECO:0007669"/>
    <property type="project" value="UniProtKB-SubCell"/>
</dbReference>
<dbReference type="GO" id="GO:0005525">
    <property type="term" value="F:GTP binding"/>
    <property type="evidence" value="ECO:0007669"/>
    <property type="project" value="UniProtKB-UniRule"/>
</dbReference>
<dbReference type="GO" id="GO:0003924">
    <property type="term" value="F:GTPase activity"/>
    <property type="evidence" value="ECO:0007669"/>
    <property type="project" value="UniProtKB-UniRule"/>
</dbReference>
<dbReference type="GO" id="GO:0046872">
    <property type="term" value="F:metal ion binding"/>
    <property type="evidence" value="ECO:0007669"/>
    <property type="project" value="UniProtKB-KW"/>
</dbReference>
<dbReference type="GO" id="GO:0030488">
    <property type="term" value="P:tRNA methylation"/>
    <property type="evidence" value="ECO:0007669"/>
    <property type="project" value="TreeGrafter"/>
</dbReference>
<dbReference type="GO" id="GO:0002098">
    <property type="term" value="P:tRNA wobble uridine modification"/>
    <property type="evidence" value="ECO:0007669"/>
    <property type="project" value="TreeGrafter"/>
</dbReference>
<dbReference type="CDD" id="cd04164">
    <property type="entry name" value="trmE"/>
    <property type="match status" value="1"/>
</dbReference>
<dbReference type="CDD" id="cd14858">
    <property type="entry name" value="TrmE_N"/>
    <property type="match status" value="1"/>
</dbReference>
<dbReference type="FunFam" id="3.30.1360.120:FF:000007">
    <property type="entry name" value="tRNA modification GTPase GTPBP3, mitochondrial"/>
    <property type="match status" value="1"/>
</dbReference>
<dbReference type="Gene3D" id="3.40.50.300">
    <property type="entry name" value="P-loop containing nucleotide triphosphate hydrolases"/>
    <property type="match status" value="1"/>
</dbReference>
<dbReference type="Gene3D" id="3.30.1360.120">
    <property type="entry name" value="Probable tRNA modification gtpase trme, domain 1"/>
    <property type="match status" value="1"/>
</dbReference>
<dbReference type="Gene3D" id="1.20.120.430">
    <property type="entry name" value="tRNA modification GTPase MnmE domain 2"/>
    <property type="match status" value="1"/>
</dbReference>
<dbReference type="HAMAP" id="MF_00379">
    <property type="entry name" value="GTPase_MnmE"/>
    <property type="match status" value="1"/>
</dbReference>
<dbReference type="InterPro" id="IPR031168">
    <property type="entry name" value="G_TrmE"/>
</dbReference>
<dbReference type="InterPro" id="IPR006073">
    <property type="entry name" value="GTP-bd"/>
</dbReference>
<dbReference type="InterPro" id="IPR018948">
    <property type="entry name" value="GTP-bd_TrmE_N"/>
</dbReference>
<dbReference type="InterPro" id="IPR004520">
    <property type="entry name" value="GTPase_MnmE"/>
</dbReference>
<dbReference type="InterPro" id="IPR027368">
    <property type="entry name" value="MnmE_dom2"/>
</dbReference>
<dbReference type="InterPro" id="IPR025867">
    <property type="entry name" value="MnmE_helical"/>
</dbReference>
<dbReference type="InterPro" id="IPR027417">
    <property type="entry name" value="P-loop_NTPase"/>
</dbReference>
<dbReference type="InterPro" id="IPR005225">
    <property type="entry name" value="Small_GTP-bd"/>
</dbReference>
<dbReference type="InterPro" id="IPR027266">
    <property type="entry name" value="TrmE/GcvT_dom1"/>
</dbReference>
<dbReference type="NCBIfam" id="NF003661">
    <property type="entry name" value="PRK05291.1-3"/>
    <property type="match status" value="1"/>
</dbReference>
<dbReference type="NCBIfam" id="TIGR00231">
    <property type="entry name" value="small_GTP"/>
    <property type="match status" value="1"/>
</dbReference>
<dbReference type="PANTHER" id="PTHR42714">
    <property type="entry name" value="TRNA MODIFICATION GTPASE GTPBP3"/>
    <property type="match status" value="1"/>
</dbReference>
<dbReference type="PANTHER" id="PTHR42714:SF2">
    <property type="entry name" value="TRNA MODIFICATION GTPASE GTPBP3, MITOCHONDRIAL"/>
    <property type="match status" value="1"/>
</dbReference>
<dbReference type="Pfam" id="PF01926">
    <property type="entry name" value="MMR_HSR1"/>
    <property type="match status" value="1"/>
</dbReference>
<dbReference type="Pfam" id="PF12631">
    <property type="entry name" value="MnmE_helical"/>
    <property type="match status" value="1"/>
</dbReference>
<dbReference type="Pfam" id="PF10396">
    <property type="entry name" value="TrmE_N"/>
    <property type="match status" value="1"/>
</dbReference>
<dbReference type="PRINTS" id="PR00326">
    <property type="entry name" value="GTP1OBG"/>
</dbReference>
<dbReference type="SUPFAM" id="SSF52540">
    <property type="entry name" value="P-loop containing nucleoside triphosphate hydrolases"/>
    <property type="match status" value="1"/>
</dbReference>
<dbReference type="SUPFAM" id="SSF116878">
    <property type="entry name" value="TrmE connector domain"/>
    <property type="match status" value="1"/>
</dbReference>
<dbReference type="PROSITE" id="PS51709">
    <property type="entry name" value="G_TRME"/>
    <property type="match status" value="1"/>
</dbReference>
<reference key="1">
    <citation type="submission" date="2007-04" db="EMBL/GenBank/DDBJ databases">
        <title>Complete sequence of chromosome of Rhodobacter sphaeroides ATCC 17025.</title>
        <authorList>
            <consortium name="US DOE Joint Genome Institute"/>
            <person name="Copeland A."/>
            <person name="Lucas S."/>
            <person name="Lapidus A."/>
            <person name="Barry K."/>
            <person name="Detter J.C."/>
            <person name="Glavina del Rio T."/>
            <person name="Hammon N."/>
            <person name="Israni S."/>
            <person name="Dalin E."/>
            <person name="Tice H."/>
            <person name="Pitluck S."/>
            <person name="Chertkov O."/>
            <person name="Brettin T."/>
            <person name="Bruce D."/>
            <person name="Han C."/>
            <person name="Schmutz J."/>
            <person name="Larimer F."/>
            <person name="Land M."/>
            <person name="Hauser L."/>
            <person name="Kyrpides N."/>
            <person name="Kim E."/>
            <person name="Richardson P."/>
            <person name="Mackenzie C."/>
            <person name="Choudhary M."/>
            <person name="Donohue T.J."/>
            <person name="Kaplan S."/>
        </authorList>
    </citation>
    <scope>NUCLEOTIDE SEQUENCE [LARGE SCALE GENOMIC DNA]</scope>
    <source>
        <strain>ATCC 17025 / ATH 2.4.3</strain>
    </source>
</reference>
<proteinExistence type="inferred from homology"/>